<name>ATPMK_BOVIN</name>
<comment type="function">
    <text evidence="1 3 6 8">Subunit k, of the mitochondrial membrane ATP synthase complex (F(1)F(0) ATP synthase or Complex V) that produces ATP from ADP in the presence of a proton gradient across the membrane which is generated by electron transport complexes of the respiratory chain (By similarity). ATP synthase complex consist of a soluble F(1) head domain - the catalytic core - and a membrane F(1) domain - the membrane proton channel. These two domains are linked by a central stalk rotating inside the F(1) region and a stationary peripheral stalk (PubMed:17570365, PubMed:25851905). During catalysis, ATP synthesis in the catalytic domain of F(1) is coupled via a rotary mechanism of the central stalk subunits to proton translocation (By similarity). In vivo, can only synthesize ATP although its ATP hydrolase activity can be activated artificially in vitro (By similarity). Part of the complex F(0) domain (PubMed:17570365, PubMed:25851905). Required for dimerization of the ATP synthase complex and as such regulates ATP synthesis in the mitochondria (By similarity).</text>
</comment>
<comment type="subunit">
    <text evidence="3 6 8">Component of the ATP synthase complex composed at least of ATP5F1A/subunit alpha, ATP5F1B/subunit beta, ATP5MC1/subunit c (homooctomer), MT-ATP6/subunit a, MT-ATP8/subunit 8, ATP5ME/subunit e, ATP5MF/subunit f, ATP5MG/subunit g, ATP5MK/subunit k, ATP5MJ/subunit j, ATP5F1C/subunit gamma, ATP5F1D/subunit delta, ATP5F1E/subunit epsilon, ATP5PF/subunit F6, ATP5PB/subunit b, ATP5PD/subunit d, ATP5PO/subunit OSCP (PubMed:17570365, PubMed:25851905). ATP synthase complex consists of a soluble F(1) head domain (subunits alpha(3) and beta(3)) - the catalytic core - and a membrane F(0) domain - the membrane proton channel (subunits c, a, 8, e, f, g, k and j). These two domains are linked by a central stalk (subunits gamma, delta, and epsilon) rotating inside the F1 region and a stationary peripheral stalk (subunits F6, b, d, and OSCP) (PubMed:25851905). The ATP synthase complex/complex V exists as a monomeric and a dimeric supercomplex that helps shape mitochondrial cristae to optimize proton flow (By similarity).</text>
</comment>
<comment type="subcellular location">
    <subcellularLocation>
        <location evidence="5">Mitochondrion membrane</location>
        <topology evidence="5">Single-pass membrane protein</topology>
    </subcellularLocation>
</comment>
<comment type="mass spectrometry"/>
<gene>
    <name evidence="3" type="primary">ATP5MK</name>
    <name type="synonym">ATPMD</name>
    <name type="synonym">DAPIT</name>
    <name type="synonym">USMG5</name>
</gene>
<proteinExistence type="evidence at protein level"/>
<sequence>MAGPEADAQFHFTGIKKYFNSYTLTGRMNCVLATYGSIALIVLYFKLRSKKTPAVKAT</sequence>
<keyword id="KW-0002">3D-structure</keyword>
<keyword id="KW-0007">Acetylation</keyword>
<keyword id="KW-0903">Direct protein sequencing</keyword>
<keyword id="KW-0472">Membrane</keyword>
<keyword id="KW-0496">Mitochondrion</keyword>
<keyword id="KW-1185">Reference proteome</keyword>
<keyword id="KW-0812">Transmembrane</keyword>
<keyword id="KW-1133">Transmembrane helix</keyword>
<reference key="1">
    <citation type="submission" date="2005-08" db="EMBL/GenBank/DDBJ databases">
        <authorList>
            <consortium name="NIH - Mammalian Gene Collection (MGC) project"/>
        </authorList>
    </citation>
    <scope>NUCLEOTIDE SEQUENCE [LARGE SCALE MRNA]</scope>
    <source>
        <strain>Hereford</strain>
        <tissue>Rumen</tissue>
    </source>
</reference>
<reference key="2">
    <citation type="journal article" date="2007" name="Mol. Cell. Proteomics">
        <title>Identification of two proteins associated with mammalian ATP synthase.</title>
        <authorList>
            <person name="Meyer B."/>
            <person name="Wittig I."/>
            <person name="Trifilieff E."/>
            <person name="Karas M."/>
            <person name="Schaegger H."/>
        </authorList>
    </citation>
    <scope>PROTEIN SEQUENCE OF 2-20</scope>
    <scope>IDENTIFICATION BY MASS SPECTROMETRY</scope>
</reference>
<reference key="3">
    <citation type="journal article" date="2006" name="Proc. Natl. Acad. Sci. U.S.A.">
        <title>Definition of the mitochondrial proteome by measurement of molecular masses of membrane proteins.</title>
        <authorList>
            <person name="Carroll J."/>
            <person name="Fearnley I.M."/>
            <person name="Walker J.E."/>
        </authorList>
    </citation>
    <scope>PROTEIN SEQUENCE OF 2-17</scope>
    <scope>SUBCELLULAR LOCATION</scope>
    <scope>CLEAVAGE OF INITIATOR METHIONINE</scope>
    <scope>MASS SPECTROMETRY</scope>
</reference>
<reference key="4">
    <citation type="journal article" date="2007" name="FEBS Lett.">
        <title>Association of two proteolipids of unknown function with ATP synthase from bovine heart mitochondria.</title>
        <authorList>
            <person name="Chen R."/>
            <person name="Runswick M.J."/>
            <person name="Carroll J."/>
            <person name="Fearnley I.M."/>
            <person name="Walker J.E."/>
        </authorList>
    </citation>
    <scope>IDENTIFICATION BY MASS SPECTROMETRY</scope>
    <scope>IDENTIFICATION IN THE ATP SYNTHASE COMPLEX</scope>
</reference>
<reference key="5">
    <citation type="journal article" date="2015" name="J. Biol. Chem.">
        <title>Organization of Subunits in the Membrane Domain of the Bovine F-ATPase Revealed by Covalent Cross-linking.</title>
        <authorList>
            <person name="Lee J."/>
            <person name="Ding S."/>
            <person name="Walpole T.B."/>
            <person name="Holding A.N."/>
            <person name="Montgomery M.G."/>
            <person name="Fearnley I.M."/>
            <person name="Walker J.E."/>
        </authorList>
    </citation>
    <scope>IDENTIFICATION BY MASS SPECTROMETRY</scope>
    <scope>IDENTIFICATION IN THE ATP SYNTHASE COMPLEX</scope>
</reference>
<protein>
    <recommendedName>
        <fullName evidence="3">ATP synthase F(0) complex subunit k, mitochondrial</fullName>
    </recommendedName>
    <alternativeName>
        <fullName evidence="9">ATP synthase membrane subunit DAPIT, mitochondrial</fullName>
    </alternativeName>
    <alternativeName>
        <fullName>Diabetes-associated protein in insulin-sensitive tissues</fullName>
    </alternativeName>
    <alternativeName>
        <fullName evidence="9">Up-regulated during skeletal muscle growth protein 5</fullName>
    </alternativeName>
</protein>
<organism>
    <name type="scientific">Bos taurus</name>
    <name type="common">Bovine</name>
    <dbReference type="NCBI Taxonomy" id="9913"/>
    <lineage>
        <taxon>Eukaryota</taxon>
        <taxon>Metazoa</taxon>
        <taxon>Chordata</taxon>
        <taxon>Craniata</taxon>
        <taxon>Vertebrata</taxon>
        <taxon>Euteleostomi</taxon>
        <taxon>Mammalia</taxon>
        <taxon>Eutheria</taxon>
        <taxon>Laurasiatheria</taxon>
        <taxon>Artiodactyla</taxon>
        <taxon>Ruminantia</taxon>
        <taxon>Pecora</taxon>
        <taxon>Bovidae</taxon>
        <taxon>Bovinae</taxon>
        <taxon>Bos</taxon>
    </lineage>
</organism>
<evidence type="ECO:0000250" key="1">
    <source>
        <dbReference type="UniProtKB" id="P19483"/>
    </source>
</evidence>
<evidence type="ECO:0000250" key="2">
    <source>
        <dbReference type="UniProtKB" id="Q78IK2"/>
    </source>
</evidence>
<evidence type="ECO:0000250" key="3">
    <source>
        <dbReference type="UniProtKB" id="Q96IX5"/>
    </source>
</evidence>
<evidence type="ECO:0000255" key="4"/>
<evidence type="ECO:0000269" key="5">
    <source>
    </source>
</evidence>
<evidence type="ECO:0000269" key="6">
    <source>
    </source>
</evidence>
<evidence type="ECO:0000269" key="7">
    <source>
    </source>
</evidence>
<evidence type="ECO:0000269" key="8">
    <source>
    </source>
</evidence>
<evidence type="ECO:0000305" key="9"/>
<evidence type="ECO:0007829" key="10">
    <source>
        <dbReference type="PDB" id="6ZIT"/>
    </source>
</evidence>
<accession>Q3ZBI7</accession>
<dbReference type="EMBL" id="BC103275">
    <property type="protein sequence ID" value="AAI03276.1"/>
    <property type="molecule type" value="mRNA"/>
</dbReference>
<dbReference type="RefSeq" id="NP_001106789.1">
    <property type="nucleotide sequence ID" value="NM_001113318.1"/>
</dbReference>
<dbReference type="RefSeq" id="XP_010822590.1">
    <property type="nucleotide sequence ID" value="XM_010824288.2"/>
</dbReference>
<dbReference type="RefSeq" id="XP_059737938.1">
    <property type="nucleotide sequence ID" value="XM_059881955.1"/>
</dbReference>
<dbReference type="PDB" id="6ZBB">
    <property type="method" value="EM"/>
    <property type="resolution" value="3.61 A"/>
    <property type="chains" value="k=2-58"/>
</dbReference>
<dbReference type="PDB" id="6ZIQ">
    <property type="method" value="EM"/>
    <property type="resolution" value="4.33 A"/>
    <property type="chains" value="k=2-58"/>
</dbReference>
<dbReference type="PDB" id="6ZIT">
    <property type="method" value="EM"/>
    <property type="resolution" value="3.49 A"/>
    <property type="chains" value="k=2-58"/>
</dbReference>
<dbReference type="PDB" id="6ZPO">
    <property type="method" value="EM"/>
    <property type="resolution" value="4.00 A"/>
    <property type="chains" value="k=2-58"/>
</dbReference>
<dbReference type="PDB" id="6ZQM">
    <property type="method" value="EM"/>
    <property type="resolution" value="3.29 A"/>
    <property type="chains" value="k=2-58"/>
</dbReference>
<dbReference type="PDB" id="6ZQN">
    <property type="method" value="EM"/>
    <property type="resolution" value="4.00 A"/>
    <property type="chains" value="k=2-58"/>
</dbReference>
<dbReference type="PDB" id="7AJB">
    <property type="method" value="EM"/>
    <property type="resolution" value="9.20 A"/>
    <property type="chains" value="Ak/k=2-58"/>
</dbReference>
<dbReference type="PDB" id="7AJC">
    <property type="method" value="EM"/>
    <property type="resolution" value="11.90 A"/>
    <property type="chains" value="Ak/k=2-58"/>
</dbReference>
<dbReference type="PDB" id="7AJD">
    <property type="method" value="EM"/>
    <property type="resolution" value="9.00 A"/>
    <property type="chains" value="Ak/k=2-58"/>
</dbReference>
<dbReference type="PDB" id="7AJE">
    <property type="method" value="EM"/>
    <property type="resolution" value="9.40 A"/>
    <property type="chains" value="Ak/k=2-58"/>
</dbReference>
<dbReference type="PDB" id="7AJF">
    <property type="method" value="EM"/>
    <property type="resolution" value="8.45 A"/>
    <property type="chains" value="Ak/k=2-58"/>
</dbReference>
<dbReference type="PDB" id="7AJG">
    <property type="method" value="EM"/>
    <property type="resolution" value="10.70 A"/>
    <property type="chains" value="Ak/k=2-58"/>
</dbReference>
<dbReference type="PDB" id="7AJH">
    <property type="method" value="EM"/>
    <property type="resolution" value="9.70 A"/>
    <property type="chains" value="Ak/k=2-58"/>
</dbReference>
<dbReference type="PDB" id="7AJI">
    <property type="method" value="EM"/>
    <property type="resolution" value="11.40 A"/>
    <property type="chains" value="Ak/k=2-58"/>
</dbReference>
<dbReference type="PDB" id="7AJJ">
    <property type="method" value="EM"/>
    <property type="resolution" value="13.10 A"/>
    <property type="chains" value="Ak/k=2-58"/>
</dbReference>
<dbReference type="PDBsum" id="6ZBB"/>
<dbReference type="PDBsum" id="6ZIQ"/>
<dbReference type="PDBsum" id="6ZIT"/>
<dbReference type="PDBsum" id="6ZPO"/>
<dbReference type="PDBsum" id="6ZQM"/>
<dbReference type="PDBsum" id="6ZQN"/>
<dbReference type="PDBsum" id="7AJB"/>
<dbReference type="PDBsum" id="7AJC"/>
<dbReference type="PDBsum" id="7AJD"/>
<dbReference type="PDBsum" id="7AJE"/>
<dbReference type="PDBsum" id="7AJF"/>
<dbReference type="PDBsum" id="7AJG"/>
<dbReference type="PDBsum" id="7AJH"/>
<dbReference type="PDBsum" id="7AJI"/>
<dbReference type="PDBsum" id="7AJJ"/>
<dbReference type="EMDB" id="EMD-11149"/>
<dbReference type="EMDB" id="EMD-11228"/>
<dbReference type="EMDB" id="EMD-11229"/>
<dbReference type="EMDB" id="EMD-11342"/>
<dbReference type="EMDB" id="EMD-11368"/>
<dbReference type="EMDB" id="EMD-11369"/>
<dbReference type="SMR" id="Q3ZBI7"/>
<dbReference type="CORUM" id="Q3ZBI7"/>
<dbReference type="FunCoup" id="Q3ZBI7">
    <property type="interactions" value="671"/>
</dbReference>
<dbReference type="IntAct" id="Q3ZBI7">
    <property type="interactions" value="1"/>
</dbReference>
<dbReference type="MINT" id="Q3ZBI7"/>
<dbReference type="STRING" id="9913.ENSBTAP00000012810"/>
<dbReference type="PaxDb" id="9913-ENSBTAP00000012810"/>
<dbReference type="Ensembl" id="ENSBTAT00000012810.3">
    <property type="protein sequence ID" value="ENSBTAP00000012810.2"/>
    <property type="gene ID" value="ENSBTAG00000009713.3"/>
</dbReference>
<dbReference type="Ensembl" id="ENSBTAT00000042591.4">
    <property type="protein sequence ID" value="ENSBTAP00000040226.2"/>
    <property type="gene ID" value="ENSBTAG00000030186.4"/>
</dbReference>
<dbReference type="Ensembl" id="ENSBTAT00000064624.3">
    <property type="protein sequence ID" value="ENSBTAP00000057922.1"/>
    <property type="gene ID" value="ENSBTAG00000045783.3"/>
</dbReference>
<dbReference type="GeneID" id="767982"/>
<dbReference type="KEGG" id="bta:101907000"/>
<dbReference type="KEGG" id="bta:767982"/>
<dbReference type="CTD" id="84833"/>
<dbReference type="VEuPathDB" id="HostDB:ENSBTAG00000009713"/>
<dbReference type="VEuPathDB" id="HostDB:ENSBTAG00000030186"/>
<dbReference type="VEuPathDB" id="HostDB:ENSBTAG00000045783"/>
<dbReference type="VGNC" id="VGNC:54246">
    <property type="gene designation" value="ATP5MK"/>
</dbReference>
<dbReference type="eggNOG" id="ENOG502S82X">
    <property type="taxonomic scope" value="Eukaryota"/>
</dbReference>
<dbReference type="GeneTree" id="ENSGT00390000015489"/>
<dbReference type="HOGENOM" id="CLU_209345_1_0_1"/>
<dbReference type="InParanoid" id="Q3ZBI7"/>
<dbReference type="OMA" id="GIAKHFN"/>
<dbReference type="OrthoDB" id="9818433at2759"/>
<dbReference type="TreeFam" id="TF324671"/>
<dbReference type="Reactome" id="R-BTA-163210">
    <property type="pathway name" value="Formation of ATP by chemiosmotic coupling"/>
</dbReference>
<dbReference type="Reactome" id="R-BTA-8949613">
    <property type="pathway name" value="Cristae formation"/>
</dbReference>
<dbReference type="Proteomes" id="UP000009136">
    <property type="component" value="Chromosome 16"/>
</dbReference>
<dbReference type="Proteomes" id="UP000009136">
    <property type="component" value="Chromosome 19"/>
</dbReference>
<dbReference type="Proteomes" id="UP000009136">
    <property type="component" value="Chromosome 26"/>
</dbReference>
<dbReference type="Bgee" id="ENSBTAG00000009713">
    <property type="expression patterns" value="Expressed in cardiac ventricle and 104 other cell types or tissues"/>
</dbReference>
<dbReference type="GO" id="GO:0031966">
    <property type="term" value="C:mitochondrial membrane"/>
    <property type="evidence" value="ECO:0007669"/>
    <property type="project" value="UniProtKB-SubCell"/>
</dbReference>
<dbReference type="GO" id="GO:0005739">
    <property type="term" value="C:mitochondrion"/>
    <property type="evidence" value="ECO:0000305"/>
    <property type="project" value="UniProtKB"/>
</dbReference>
<dbReference type="GO" id="GO:0045259">
    <property type="term" value="C:proton-transporting ATP synthase complex"/>
    <property type="evidence" value="ECO:0000314"/>
    <property type="project" value="UniProtKB"/>
</dbReference>
<dbReference type="InterPro" id="IPR009125">
    <property type="entry name" value="ATPMK"/>
</dbReference>
<dbReference type="PANTHER" id="PTHR34038">
    <property type="entry name" value="ATP SYNTHASE MEMBRANE SUBUNIT DAPIT, MITOCHONDRIAL"/>
    <property type="match status" value="1"/>
</dbReference>
<dbReference type="PANTHER" id="PTHR34038:SF1">
    <property type="entry name" value="ATP SYNTHASE MEMBRANE SUBUNIT K, MITOCHONDRIAL"/>
    <property type="match status" value="1"/>
</dbReference>
<dbReference type="Pfam" id="PF14960">
    <property type="entry name" value="ATP_synth_reg"/>
    <property type="match status" value="1"/>
</dbReference>
<dbReference type="PRINTS" id="PR01821">
    <property type="entry name" value="DAPIT"/>
</dbReference>
<feature type="initiator methionine" description="Removed" evidence="5 7">
    <location>
        <position position="1"/>
    </location>
</feature>
<feature type="chain" id="PRO_0000231577" description="ATP synthase F(0) complex subunit k, mitochondrial">
    <location>
        <begin position="2"/>
        <end position="58"/>
    </location>
</feature>
<feature type="transmembrane region" description="Helical" evidence="4">
    <location>
        <begin position="23"/>
        <end position="45"/>
    </location>
</feature>
<feature type="modified residue" description="N6-acetyllysine; partial" evidence="2">
    <location>
        <position position="16"/>
    </location>
</feature>
<feature type="modified residue" description="N6-acetyllysine; partial" evidence="2">
    <location>
        <position position="17"/>
    </location>
</feature>
<feature type="turn" evidence="10">
    <location>
        <begin position="14"/>
        <end position="16"/>
    </location>
</feature>
<feature type="helix" evidence="10">
    <location>
        <begin position="17"/>
        <end position="19"/>
    </location>
</feature>
<feature type="strand" evidence="10">
    <location>
        <begin position="21"/>
        <end position="23"/>
    </location>
</feature>
<feature type="helix" evidence="10">
    <location>
        <begin position="24"/>
        <end position="45"/>
    </location>
</feature>